<comment type="function">
    <text evidence="1">Required for chromosome condensation and partitioning.</text>
</comment>
<comment type="subunit">
    <text evidence="1">Homodimer.</text>
</comment>
<comment type="subcellular location">
    <subcellularLocation>
        <location evidence="1">Cytoplasm</location>
    </subcellularLocation>
</comment>
<comment type="domain">
    <text evidence="1">Contains large globular domains required for ATP hydrolysis at each terminus and a third globular domain forming a flexible SMC hinge near the middle of the molecule. These domains are separated by coiled-coil structures.</text>
</comment>
<comment type="similarity">
    <text evidence="1">Belongs to the SMC family.</text>
</comment>
<comment type="sequence caution" evidence="2">
    <conflict type="erroneous initiation">
        <sequence resource="EMBL-CDS" id="AAS05307"/>
    </conflict>
    <text>Extended N-terminus.</text>
</comment>
<gene>
    <name evidence="1" type="primary">smc</name>
    <name type="ordered locus">MAP_2990c</name>
</gene>
<dbReference type="EMBL" id="AE016958">
    <property type="protein sequence ID" value="AAS05307.1"/>
    <property type="status" value="ALT_INIT"/>
    <property type="molecule type" value="Genomic_DNA"/>
</dbReference>
<dbReference type="RefSeq" id="WP_040963272.1">
    <property type="nucleotide sequence ID" value="NC_002944.2"/>
</dbReference>
<dbReference type="SMR" id="Q73VM3"/>
<dbReference type="STRING" id="262316.MAP_2990c"/>
<dbReference type="KEGG" id="mpa:MAP_2990c"/>
<dbReference type="PATRIC" id="fig|262316.17.peg.3167"/>
<dbReference type="eggNOG" id="COG1196">
    <property type="taxonomic scope" value="Bacteria"/>
</dbReference>
<dbReference type="HOGENOM" id="CLU_001042_2_2_11"/>
<dbReference type="Proteomes" id="UP000000580">
    <property type="component" value="Chromosome"/>
</dbReference>
<dbReference type="GO" id="GO:0005694">
    <property type="term" value="C:chromosome"/>
    <property type="evidence" value="ECO:0007669"/>
    <property type="project" value="InterPro"/>
</dbReference>
<dbReference type="GO" id="GO:0005737">
    <property type="term" value="C:cytoplasm"/>
    <property type="evidence" value="ECO:0007669"/>
    <property type="project" value="UniProtKB-SubCell"/>
</dbReference>
<dbReference type="GO" id="GO:0005524">
    <property type="term" value="F:ATP binding"/>
    <property type="evidence" value="ECO:0007669"/>
    <property type="project" value="UniProtKB-UniRule"/>
</dbReference>
<dbReference type="GO" id="GO:0016887">
    <property type="term" value="F:ATP hydrolysis activity"/>
    <property type="evidence" value="ECO:0007669"/>
    <property type="project" value="InterPro"/>
</dbReference>
<dbReference type="GO" id="GO:0003677">
    <property type="term" value="F:DNA binding"/>
    <property type="evidence" value="ECO:0007669"/>
    <property type="project" value="UniProtKB-UniRule"/>
</dbReference>
<dbReference type="GO" id="GO:0030261">
    <property type="term" value="P:chromosome condensation"/>
    <property type="evidence" value="ECO:0007669"/>
    <property type="project" value="InterPro"/>
</dbReference>
<dbReference type="GO" id="GO:0007059">
    <property type="term" value="P:chromosome segregation"/>
    <property type="evidence" value="ECO:0007669"/>
    <property type="project" value="UniProtKB-UniRule"/>
</dbReference>
<dbReference type="GO" id="GO:0006260">
    <property type="term" value="P:DNA replication"/>
    <property type="evidence" value="ECO:0007669"/>
    <property type="project" value="UniProtKB-UniRule"/>
</dbReference>
<dbReference type="GO" id="GO:0007062">
    <property type="term" value="P:sister chromatid cohesion"/>
    <property type="evidence" value="ECO:0007669"/>
    <property type="project" value="InterPro"/>
</dbReference>
<dbReference type="CDD" id="cd03278">
    <property type="entry name" value="ABC_SMC_barmotin"/>
    <property type="match status" value="1"/>
</dbReference>
<dbReference type="FunFam" id="3.40.50.300:FF:000901">
    <property type="entry name" value="Chromosome partition protein Smc"/>
    <property type="match status" value="1"/>
</dbReference>
<dbReference type="FunFam" id="3.40.50.300:FF:000984">
    <property type="entry name" value="Chromosome partition protein Smc"/>
    <property type="match status" value="1"/>
</dbReference>
<dbReference type="Gene3D" id="1.20.1060.20">
    <property type="match status" value="1"/>
</dbReference>
<dbReference type="Gene3D" id="3.30.70.1620">
    <property type="match status" value="1"/>
</dbReference>
<dbReference type="Gene3D" id="3.40.50.300">
    <property type="entry name" value="P-loop containing nucleotide triphosphate hydrolases"/>
    <property type="match status" value="2"/>
</dbReference>
<dbReference type="HAMAP" id="MF_01894">
    <property type="entry name" value="Smc_prok"/>
    <property type="match status" value="1"/>
</dbReference>
<dbReference type="InterPro" id="IPR027417">
    <property type="entry name" value="P-loop_NTPase"/>
</dbReference>
<dbReference type="InterPro" id="IPR003395">
    <property type="entry name" value="RecF/RecN/SMC_N"/>
</dbReference>
<dbReference type="InterPro" id="IPR024704">
    <property type="entry name" value="SMC"/>
</dbReference>
<dbReference type="InterPro" id="IPR010935">
    <property type="entry name" value="SMC_hinge"/>
</dbReference>
<dbReference type="InterPro" id="IPR036277">
    <property type="entry name" value="SMC_hinge_sf"/>
</dbReference>
<dbReference type="InterPro" id="IPR011890">
    <property type="entry name" value="SMC_prok"/>
</dbReference>
<dbReference type="NCBIfam" id="TIGR02168">
    <property type="entry name" value="SMC_prok_B"/>
    <property type="match status" value="1"/>
</dbReference>
<dbReference type="PANTHER" id="PTHR43977">
    <property type="entry name" value="STRUCTURAL MAINTENANCE OF CHROMOSOMES PROTEIN 3"/>
    <property type="match status" value="1"/>
</dbReference>
<dbReference type="Pfam" id="PF06470">
    <property type="entry name" value="SMC_hinge"/>
    <property type="match status" value="1"/>
</dbReference>
<dbReference type="Pfam" id="PF02463">
    <property type="entry name" value="SMC_N"/>
    <property type="match status" value="1"/>
</dbReference>
<dbReference type="PIRSF" id="PIRSF005719">
    <property type="entry name" value="SMC"/>
    <property type="match status" value="1"/>
</dbReference>
<dbReference type="SMART" id="SM00968">
    <property type="entry name" value="SMC_hinge"/>
    <property type="match status" value="1"/>
</dbReference>
<dbReference type="SUPFAM" id="SSF52540">
    <property type="entry name" value="P-loop containing nucleoside triphosphate hydrolases"/>
    <property type="match status" value="1"/>
</dbReference>
<dbReference type="SUPFAM" id="SSF75553">
    <property type="entry name" value="Smc hinge domain"/>
    <property type="match status" value="1"/>
</dbReference>
<feature type="chain" id="PRO_0000409277" description="Chromosome partition protein Smc">
    <location>
        <begin position="1"/>
        <end position="1196"/>
    </location>
</feature>
<feature type="domain" description="SMC hinge">
    <location>
        <begin position="510"/>
        <end position="621"/>
    </location>
</feature>
<feature type="coiled-coil region" evidence="1">
    <location>
        <begin position="168"/>
        <end position="288"/>
    </location>
</feature>
<feature type="coiled-coil region" evidence="1">
    <location>
        <begin position="327"/>
        <end position="497"/>
    </location>
</feature>
<feature type="coiled-coil region" evidence="1">
    <location>
        <begin position="654"/>
        <end position="829"/>
    </location>
</feature>
<feature type="coiled-coil region" evidence="1">
    <location>
        <begin position="972"/>
        <end position="1026"/>
    </location>
</feature>
<feature type="binding site" evidence="1">
    <location>
        <begin position="32"/>
        <end position="39"/>
    </location>
    <ligand>
        <name>ATP</name>
        <dbReference type="ChEBI" id="CHEBI:30616"/>
    </ligand>
</feature>
<accession>Q73VM3</accession>
<organism>
    <name type="scientific">Mycolicibacterium paratuberculosis (strain ATCC BAA-968 / K-10)</name>
    <name type="common">Mycobacterium paratuberculosis</name>
    <dbReference type="NCBI Taxonomy" id="262316"/>
    <lineage>
        <taxon>Bacteria</taxon>
        <taxon>Bacillati</taxon>
        <taxon>Actinomycetota</taxon>
        <taxon>Actinomycetes</taxon>
        <taxon>Mycobacteriales</taxon>
        <taxon>Mycobacteriaceae</taxon>
        <taxon>Mycobacterium</taxon>
        <taxon>Mycobacterium avium complex (MAC)</taxon>
    </lineage>
</organism>
<reference key="1">
    <citation type="journal article" date="2005" name="Proc. Natl. Acad. Sci. U.S.A.">
        <title>The complete genome sequence of Mycobacterium avium subspecies paratuberculosis.</title>
        <authorList>
            <person name="Li L."/>
            <person name="Bannantine J.P."/>
            <person name="Zhang Q."/>
            <person name="Amonsin A."/>
            <person name="May B.J."/>
            <person name="Alt D."/>
            <person name="Banerji N."/>
            <person name="Kanjilal S."/>
            <person name="Kapur V."/>
        </authorList>
    </citation>
    <scope>NUCLEOTIDE SEQUENCE [LARGE SCALE GENOMIC DNA]</scope>
    <source>
        <strain>ATCC BAA-968 / K-10</strain>
    </source>
</reference>
<proteinExistence type="inferred from homology"/>
<evidence type="ECO:0000255" key="1">
    <source>
        <dbReference type="HAMAP-Rule" id="MF_01894"/>
    </source>
</evidence>
<evidence type="ECO:0000305" key="2"/>
<protein>
    <recommendedName>
        <fullName evidence="1">Chromosome partition protein Smc</fullName>
    </recommendedName>
</protein>
<keyword id="KW-0067">ATP-binding</keyword>
<keyword id="KW-0175">Coiled coil</keyword>
<keyword id="KW-0963">Cytoplasm</keyword>
<keyword id="KW-0238">DNA-binding</keyword>
<keyword id="KW-0547">Nucleotide-binding</keyword>
<keyword id="KW-1185">Reference proteome</keyword>
<sequence>MYLKSLTLKGFKSFASPTTLRFEPGITAVVGPNGSGKSNVVDALAWVMGEQGAKTLRGGKMEDVIFAGTSSRAPLGRAEVTVTIDNSDNALPIEYSEVSITRRMFRDGASEYEINGSSCRLMDVQELLSDSGIGREMHVIVGQGKLDEILQSRPEDRRAFIEEAAGVLKHRKRKEKALRKLDAMSANLARLTDLTTELRRQLKPLGRQAEVARRAQTIQADLRDARLRLAADDLVNRRGEREAIFEAEAAMRREHDEASARLAVASDELAAHEKALGELSGRAESVQQTWFALSALAERVAATVRIASERAQHLDLEPVTTGDTDPDALEAEAERVAAAEQQLLAELATARSRLETARAELAEREREAAEADRAHMAAVRAEADRREGLARLAGQVETMRARVESIDDSVARLSERIEAAAARAQQAKAEFETVQGRVGELDQGEVGLDEHHERTVAALRLADERVAELQAAERDAERKVASLRARIDALAVGLERKDGTAWLTENHSGAGILGPMAKLVKVRSGYEAAVAAVLGSAADALAADGLGAARSALGALKQADGGRAALVLGDWPADPPAPQPAPAGALWALDLIDAPERLRGAITAMLSGVAVVDDLDRALALVAEHPRLRAVTLDGDLVGAGWVSGGSDRKLSTLEVTSEIDKAGAELAAAEAQVAQLSAALSGALAEQAARQDSAEQALAALNESDSAISGMYEQLGRLGQEARTSEDEWSRLLRQREELEAGRTQTVAEVTELENRLRNAQETPQEPAAEPVNRQQIAAATDAARSAEVEARLAVRTAEERANAVRGRADSLRRAAAAEREARVRAQQAREARLRAAAVAAAVADSGRLLATRLNAVVAAASRIRDALAAERQQRATAMAAVRDEVNALSARVAALTDSLHSDEVANAQAALRIEQLEQMVLEQFGMAPADLIAEYGPHIALPPSELEMAEYEQAKERGEQVFAPAPIPFDRPTQERRAKRAERELAELGRVNPLALEEFAALEERYNFLSTQLEDVKAARKDLLGVVDEVDARILQVFSEAYTDVEREFSDVFGVLFPGGEGRLRLTDPSNMLTTGIEVEARPPGKKITRLSLLSGGEKALTAVAMLVAIFRARPSPFYIMDEVEAALDDTNLRRLISLFELLRARSQLIIITHQKPTMEVADALYGVTMQGDGITAVISQRMRGQQVDQLVTT</sequence>
<name>SMC_MYCPA</name>